<accession>Q12019</accession>
<accession>D6VYA6</accession>
<accession>Q7LGX0</accession>
<organism>
    <name type="scientific">Saccharomyces cerevisiae (strain ATCC 204508 / S288c)</name>
    <name type="common">Baker's yeast</name>
    <dbReference type="NCBI Taxonomy" id="559292"/>
    <lineage>
        <taxon>Eukaryota</taxon>
        <taxon>Fungi</taxon>
        <taxon>Dikarya</taxon>
        <taxon>Ascomycota</taxon>
        <taxon>Saccharomycotina</taxon>
        <taxon>Saccharomycetes</taxon>
        <taxon>Saccharomycetales</taxon>
        <taxon>Saccharomycetaceae</taxon>
        <taxon>Saccharomyces</taxon>
    </lineage>
</organism>
<sequence>MSQDRILLDLDVVNQRLILFNSAFPSDAIEAPFHFSNKESTSENLDNLAGTILHSRSITGHVFLYKHIFLEIVARWIKDSKKKDYVLVIEKLASIITIFPVAMPLIEDYLDKENDHFITILQNPSTQKDSDMFKILLAYYRLLYHNKEVFARFIQPDILYQLVDLLTKEQENQVVIFLALKVLSLYLDMGEKTLNDMLDTYIKSRDSLLGHFEGDSGIDYSFLELNEAKRCANFSKLPSVPECFTIEKKSSYFIIEPQDLSTKVASICGVIVPKVHTIHDKVFYPLTFVPTHKTVSSLRQLGRKIQNSTPIMLIGKAGSGKTFLINELSKYMGCHDSIVKIHLGEQTDAKLLIGTYTSGDKPGTFEWRAGVLATAVKEGRWVLIEDIDKAPTDVLSILLSLLEKRELTIPSRGETVKAANGFQLISTVRINEDHQKDSSNKIYNLNMIGMRIWNVIELEEPSEEDLTHILAQKFPILTNLIPKLIDSYKNVKSIYMNTKFISLNKGAHTRVVSVRDLIKLCERLDILFKNNGINKPDQLIQSSVYDSIFSEAADCFAGAIGEFKALEPIIQAIGESLDIASSRISLFLTQHVPTLENLDDSIKIGRAVLLKEKLNIQKKSMNSTLFAFTNHSLRLMEQISVCIQMTEPVLLVGETGTGKTTVVQQLAKMLAKKLTVINVSQQTETGDLLGGYKPVNSKTVAVPIQENFETLFNATFSLKKNEKFHKMLHRCFNKNQWKNVVKLWNEAYKMAQSILKITNTENENENAKKKKRRLNTHEKKLLLDKWADFNDSVKKFEAQSSSIENSFVFNFVEGSLVKTIRAGEWLLLDEVNLATADTLESISDLLTEPDSRSILLSEKGDAEPIKAHPDFRIFACMNPATDVGKRDLPMGIRSRFTEIYVHSPERDITDLLSIIDKYIGKYSVSDEWVGNDIAELYLEAKKLSDNNTIVDGSNQKPHFSIRTLTRTLLYVTDIIHIYGLRRSLYDGFCMSFLTLLDQKSEAILKPVIEKFTLGRLKNVKSIMSQTPPSPGPDYVQFKHYWMKKGPNTIQEQAHYIITPFVEKNMMNLVRATSGKRFPVLIQGPTSSGKTSMIKYLADITGHKFVRINNHEHTDLQEYLGTYVTDDTGKLSFKEGVLVEALRKGYWIVLDELNLAPTDVLEALNRLLDDNRELFIPETQEVVHPHPDFLLFATQNPPGIYGGRKILSRAFRNRFLELHFDDIPQDELEIILRERCQIAPSYAKKIVEVYRQLSIERSASRLFEQKNSFATLRDLFRWALRDAVGYEQLAASGYMLLAERCRTPQEKVTVKKTLEKVMKVKLDMDQYYASLEDKSLEAIGSVTWTKGMRRLSVLVSSCLKNKEPVLLVGETGCGKTTICQLLAQFMGRELITLNAHQNTETGDILGAQRPVRNRSEIQYKLIKSLKTALNIANDQDVDLKELLQLYSKSDNKNIAEDVQLEIQKLRDSLNVLFEWSDGPLIQAMRTGNFFLLDEISLADDSVLERLNSVLEPERSLLLAEQGSSDSLVTASENFQFFATMNPGGDYGKKELSPALRNRFTEIWVPSMEDFNDVNMIVSSRLLEDLKDLANPIVKFSEWFGKKLGGGNATSGVISLRDILAWVEFINKVFPKIQNKSTALIQGASMVFIDALGTNNTAYLAENENDLKSLRTECIIQLLKLCGDDLELQQIETNEIIVTQDELQVGMFKIPRFPDAQSSSFNLTAPTTASNLVRVVRAMQVHKPILLEGSPGVGKTSLITALANITGNKLTRINLSEQTDLVDLFGADAPGERSGEFLWHDAPFLRAMKKGEWVLLDEMNLASQSVLEGLNACLDHRGEAYIPELDISFSCHPNFLVFAAQNPQYQGGGRKGLPKSFVNRFSVVFIDMLTSDDLLLIAKHLYPSIEPDIIAKMIKLMSTLEDQVCKRKLWGNSGSPWEFNLRDTLRWLKLLNQYSICEDVDVFDFVDIIVKQRFRTISDKNKAQLLIEDIFGKFSTKENFFKLTEDYVQINNEVALRNPHYRYPITQNLFPLECNVAVYESVLKAINNNWPLVLVGPSNSGKTETIRFLASILGPRVDVFSMNSDIDSMDILGGYEQVDLTRQISYITEELTNIVREIISMNMKLSPNATAIMEGLNLLKYLLNNIVTPEKFQDFRNRFNRFFSHLEGHPLLKTMSMNIEKMTEIITKEASVKFEWFDGMLVKAVEKGHWLILDNANLCSPSVLDRLNSLLEIDGSLLINECSQEDGQPRVLKPHPNFRLFLTMDPKYGELSRAMRNRGVEIYIDELHSRSTAFDRLTLGFELGENIDFVSIDDGIKKIKLNEPDMSIPLKHYVPSYLSRPCIFAQVHDILLLSDEEPIEESLAAVIPISHLGEVGKWANNVLNCTEYSEKKIAERLYVFITFLTDMGVLEKINNLYKPANLKFQKALGLHDKQLTEETVSLTLNEYVLPTVSKYSDKIKSPESLYLLSSLRLLLNSLNALKLINEKSTHGKIDELTYIELSAAAFNGRHLKNIPRIPIFCILYNILTVMSENLKTESLFCGSNQYQYYWDLLVIVIAALETAVTKDEARLRVYKELIDSWIASVKSKSDIEITPFLNINLEFTDVLQLSRGHSITLLWDIFRKNYPTTSNSWLAFEKLINLSEKFDKVRLLQFSESYNSIKDLMDVFRLLNDDVLNNKLSEFNLLLSKLEDGINELELISNKFLNKRKHYFADEFDNLIRYTFSVDTAELIKELAPASSLATQKLTKLITNKYNYPPIFDVLWTEKNAKLTSFTSTIFSSQFLEDVVRKSNNLKSFSGNQIKQSISDAELLLSSTIKCSPNLLKSQMEYYKNMLLSWLRKVIDIHVGGDCLKLTLKELCSLIEEKTASETRVTFAEYIFPALDLAESSKSLEELGEAWITFGTGLLLLFVPDSPYDPAIHDYVLYDLFLKTKTFSQNLMKSWRNVRKVISGDEEIFTEKLINTISDDDAPQSPRVYRTGMSIDSLFDEWMAFLSSTMSSRQIKELVSSYKCNSDQSDRRLEMLQQNSAHFLNRLESGYSKFADLNDILAGYIYSINFGFDLLKLQKSKDRASFQISPLWSMDPINISCAENVLSAYHELSRFFKKGDMEDTSIEKVLMYFLTLFKFHKRDTNLLEIFEAALYTLYSRWSVRRFRQEQEENEKSNMFKFNDNSDDYEADFRKLFPDYEDTALVTNEKDISSPENLDDIYFKLADTYISVFDKDHDANFSSELKSGAIITTILSEDLKNTRIEELKSGSLSAVINTLDAETQSFKNTEVFGNIDFYHDFSIPEFQKAGDIIETVLKSVLKLLKQWPEHATLKELYRVSQEFLNYPIKTPLARQLQKIEQIYTYLAEWEKYASSEVSLNNTVKLITDLIVSWRKLELRTWKGLFNSEDAKTRKSIGKWWFYLYESIVISNFVSEKKETAPNATLLVSSLNLFFSKSTLGEFNARLDLVKAFYKHIQLIGLRSSKIAGLLHNTIKFYYQFKPLIDERITNGKKSLEKEIDDIILLASWKDVNVDALKQSSRKSHNNLYKIVRKYRDLLNGDAKTIIEAGLLYSNENKLKLPTLKQHFYEDPNLEASKNLVKEISTWSMRAAPLRNIDTVASNMDSYLEKISSQEFPNFADLASDFYAEAERLRKETPNVYTKENKKRLAYLKTQKSKLLGDALKELRRIGLKVNFREDIQKVQSSTTTILANIAPFNNEYLNSSDAFFFKILDLLPKLRSAASNPSDDIPVAAIERGMALAQSLMFSLITVRHPLSEFTNDYCKINGMMLDLEHFTCLKGDIVHSSLKANVDNVRLFEKWLPSLLDYAAQTLSVISKYSATSEQQKILLDAKSTLSSFFVHFNSSRIFDSSFIESYSRFELFINELLKKLENAKETGNAFVFDIIIEWIKANKGGPIKKEQKRGPSVEDVEQAFRRTFTSIILSFQKVIGDGIESISETDDNWLSASFKKVMVNVKLLRSSVVSKNIETALSLLKDFDFTTTESIYVKSVISFTLPVITRYYNAMTVVLERSRIYYTNTSRGMYILSTILHSLAKNGFCSPQPPSEEVDDKNLQEGTGLGDGEGAQNNNKDVEQDEDLTEDAQNENKEQQDKDERDDENEDDAVEMEGDMAGELEDLSNGEENDDEDTDSEEEELDEEIDDLNEDDPNAIDDKMWDDKASDNSKEKDTDQNLDGKNQEEDVQAAENDEQQRDNKEGGDEDPNAPEDGDEEIENDENAEEENDVGEQEDEVKDEEGEDLEANVPEIETLDLPEDMNLDSEHEESDEDVDMSDGMPDDLNKEEVGNEDEEVKQESGIESDNENDEPGPEEDAGETETALDEEEGAEEDVDMTNDEGKEDEENGPEEQAMSDEEELKQDAAMEENKEKGGEQNTEGLDGVEEKADTEDIDQEAAVQQDSGSKGAGADATDTQEQDDVGGSGTTQNTYEEDQEDVTKNNEESREEATAALKQLGDSMKEYHRRRQDIKEAQTNGEEDENLEKNNERPDEFEHVEGANTETDTQALGSATQDQLQTIDEDMAIDDDREEQEVDQKELVEDADDEKMDIDEEEMLSDIDAHDANNDVDSKKSGFIGKRKSEEDFENELSNEHFSADQEDDSEIQSLIENIEDNPPDASASLTPERSLEESRELWHKSEISTADLVSRLGEQLRLILEPTLATKLKGDYKTGKRLNMKRIIPYIASQFRKDKIWLRRTKPSKRQYQIMIALDDSKSMSESKCVKLAFDSLCLVSKTLTQLEAGGLSIVKFGENIKEVHSFDQQFSNESGARAFQWFGFQETKTDVKKLVAESTKIFERARAMVHNDQWQLEIVISDGICEDHETIQKLVRRARENKIMLVFVIIDGITSNESILDMSQVNYIPDQYGNPQLKITKYLDTFPFEFYVVVHDISELPEMLSLILRQYFTDLASS</sequence>
<proteinExistence type="evidence at protein level"/>
<gene>
    <name type="primary">MDN1</name>
    <name type="synonym">REA1</name>
    <name type="ordered locus">YLR106C</name>
    <name type="ORF">L2901</name>
    <name type="ORF">L8004.13</name>
</gene>
<feature type="chain" id="PRO_0000096337" description="Midasin">
    <location>
        <begin position="1"/>
        <end position="4910"/>
    </location>
</feature>
<feature type="domain" description="VWFA" evidence="2">
    <location>
        <begin position="4704"/>
        <end position="4899"/>
    </location>
</feature>
<feature type="region of interest" description="AAA-ATPase protomer 1" evidence="1">
    <location>
        <begin position="305"/>
        <end position="528"/>
    </location>
</feature>
<feature type="region of interest" description="AAA-ATPase protomer 2" evidence="1">
    <location>
        <begin position="636"/>
        <end position="975"/>
    </location>
</feature>
<feature type="region of interest" description="Interaction with RIX1" evidence="13">
    <location>
        <begin position="695"/>
        <end position="803"/>
    </location>
</feature>
<feature type="region of interest" description="AAA-ATPase protomer 3" evidence="1">
    <location>
        <begin position="1054"/>
        <end position="1280"/>
    </location>
</feature>
<feature type="region of interest" description="AAA-ATPase protomer 4" evidence="1">
    <location>
        <begin position="1345"/>
        <end position="1624"/>
    </location>
</feature>
<feature type="region of interest" description="AAA-ATPase protomer 5" evidence="1">
    <location>
        <begin position="1732"/>
        <end position="1985"/>
    </location>
</feature>
<feature type="region of interest" description="AAA-ATPase protomer 6" evidence="1">
    <location>
        <begin position="2036"/>
        <end position="2286"/>
    </location>
</feature>
<feature type="region of interest" description="Linker" evidence="15">
    <location>
        <begin position="2372"/>
        <end position="4075"/>
    </location>
</feature>
<feature type="region of interest" description="Disordered" evidence="3">
    <location>
        <begin position="4045"/>
        <end position="4547"/>
    </location>
</feature>
<feature type="region of interest" description="Disordered" evidence="3">
    <location>
        <begin position="4555"/>
        <end position="4574"/>
    </location>
</feature>
<feature type="region of interest" description="Disordered" evidence="3">
    <location>
        <begin position="4579"/>
        <end position="4600"/>
    </location>
</feature>
<feature type="compositionally biased region" description="Acidic residues" evidence="3">
    <location>
        <begin position="4078"/>
        <end position="4088"/>
    </location>
</feature>
<feature type="compositionally biased region" description="Basic and acidic residues" evidence="3">
    <location>
        <begin position="4089"/>
        <end position="4098"/>
    </location>
</feature>
<feature type="compositionally biased region" description="Acidic residues" evidence="3">
    <location>
        <begin position="4099"/>
        <end position="4154"/>
    </location>
</feature>
<feature type="compositionally biased region" description="Basic and acidic residues" evidence="3">
    <location>
        <begin position="4155"/>
        <end position="4174"/>
    </location>
</feature>
<feature type="compositionally biased region" description="Acidic residues" evidence="3">
    <location>
        <begin position="4202"/>
        <end position="4244"/>
    </location>
</feature>
<feature type="compositionally biased region" description="Acidic residues" evidence="3">
    <location>
        <begin position="4251"/>
        <end position="4274"/>
    </location>
</feature>
<feature type="compositionally biased region" description="Acidic residues" evidence="3">
    <location>
        <begin position="4288"/>
        <end position="4358"/>
    </location>
</feature>
<feature type="compositionally biased region" description="Basic and acidic residues" evidence="3">
    <location>
        <begin position="4359"/>
        <end position="4372"/>
    </location>
</feature>
<feature type="compositionally biased region" description="Basic and acidic residues" evidence="3">
    <location>
        <begin position="4435"/>
        <end position="4447"/>
    </location>
</feature>
<feature type="compositionally biased region" description="Basic and acidic residues" evidence="3">
    <location>
        <begin position="4481"/>
        <end position="4495"/>
    </location>
</feature>
<feature type="compositionally biased region" description="Polar residues" evidence="3">
    <location>
        <begin position="4498"/>
        <end position="4516"/>
    </location>
</feature>
<feature type="compositionally biased region" description="Acidic residues" evidence="3">
    <location>
        <begin position="4517"/>
        <end position="4531"/>
    </location>
</feature>
<feature type="compositionally biased region" description="Basic and acidic residues" evidence="3">
    <location>
        <begin position="4557"/>
        <end position="4570"/>
    </location>
</feature>
<feature type="binding site" evidence="1">
    <location>
        <begin position="315"/>
        <end position="322"/>
    </location>
    <ligand>
        <name>ATP</name>
        <dbReference type="ChEBI" id="CHEBI:30616"/>
    </ligand>
</feature>
<feature type="binding site" evidence="1">
    <location>
        <begin position="653"/>
        <end position="660"/>
    </location>
    <ligand>
        <name>ATP</name>
        <dbReference type="ChEBI" id="CHEBI:30616"/>
    </ligand>
</feature>
<feature type="binding site" evidence="1">
    <location>
        <begin position="1083"/>
        <end position="1090"/>
    </location>
    <ligand>
        <name>ATP</name>
        <dbReference type="ChEBI" id="CHEBI:30616"/>
    </ligand>
</feature>
<feature type="binding site" evidence="1">
    <location>
        <begin position="1368"/>
        <end position="1375"/>
    </location>
    <ligand>
        <name>ATP</name>
        <dbReference type="ChEBI" id="CHEBI:30616"/>
    </ligand>
</feature>
<feature type="binding site" evidence="1">
    <location>
        <begin position="1747"/>
        <end position="1754"/>
    </location>
    <ligand>
        <name>ATP</name>
        <dbReference type="ChEBI" id="CHEBI:30616"/>
    </ligand>
</feature>
<feature type="binding site" evidence="1">
    <location>
        <begin position="2054"/>
        <end position="2061"/>
    </location>
    <ligand>
        <name>ATP</name>
        <dbReference type="ChEBI" id="CHEBI:30616"/>
    </ligand>
</feature>
<feature type="modified residue" description="Phosphothreonine" evidence="16">
    <location>
        <position position="1026"/>
    </location>
</feature>
<feature type="modified residue" description="Phosphoserine" evidence="16 17">
    <location>
        <position position="2971"/>
    </location>
</feature>
<feature type="modified residue" description="Phosphoserine" evidence="16">
    <location>
        <position position="4353"/>
    </location>
</feature>
<feature type="modified residue" description="Phosphothreonine" evidence="16">
    <location>
        <position position="4388"/>
    </location>
</feature>
<feature type="modified residue" description="Phosphoserine" evidence="17">
    <location>
        <position position="4555"/>
    </location>
</feature>
<reference key="1">
    <citation type="journal article" date="1997" name="Nature">
        <title>The nucleotide sequence of Saccharomyces cerevisiae chromosome XII.</title>
        <authorList>
            <person name="Johnston M."/>
            <person name="Hillier L.W."/>
            <person name="Riles L."/>
            <person name="Albermann K."/>
            <person name="Andre B."/>
            <person name="Ansorge W."/>
            <person name="Benes V."/>
            <person name="Brueckner M."/>
            <person name="Delius H."/>
            <person name="Dubois E."/>
            <person name="Duesterhoeft A."/>
            <person name="Entian K.-D."/>
            <person name="Floeth M."/>
            <person name="Goffeau A."/>
            <person name="Hebling U."/>
            <person name="Heumann K."/>
            <person name="Heuss-Neitzel D."/>
            <person name="Hilbert H."/>
            <person name="Hilger F."/>
            <person name="Kleine K."/>
            <person name="Koetter P."/>
            <person name="Louis E.J."/>
            <person name="Messenguy F."/>
            <person name="Mewes H.-W."/>
            <person name="Miosga T."/>
            <person name="Moestl D."/>
            <person name="Mueller-Auer S."/>
            <person name="Nentwich U."/>
            <person name="Obermaier B."/>
            <person name="Piravandi E."/>
            <person name="Pohl T.M."/>
            <person name="Portetelle D."/>
            <person name="Purnelle B."/>
            <person name="Rechmann S."/>
            <person name="Rieger M."/>
            <person name="Rinke M."/>
            <person name="Rose M."/>
            <person name="Scharfe M."/>
            <person name="Scherens B."/>
            <person name="Scholler P."/>
            <person name="Schwager C."/>
            <person name="Schwarz S."/>
            <person name="Underwood A.P."/>
            <person name="Urrestarazu L.A."/>
            <person name="Vandenbol M."/>
            <person name="Verhasselt P."/>
            <person name="Vierendeels F."/>
            <person name="Voet M."/>
            <person name="Volckaert G."/>
            <person name="Voss H."/>
            <person name="Wambutt R."/>
            <person name="Wedler E."/>
            <person name="Wedler H."/>
            <person name="Zimmermann F.K."/>
            <person name="Zollner A."/>
            <person name="Hani J."/>
            <person name="Hoheisel J.D."/>
        </authorList>
    </citation>
    <scope>NUCLEOTIDE SEQUENCE [LARGE SCALE GENOMIC DNA]</scope>
    <source>
        <strain>ATCC 204508 / S288c</strain>
    </source>
</reference>
<reference key="2">
    <citation type="journal article" date="2014" name="G3 (Bethesda)">
        <title>The reference genome sequence of Saccharomyces cerevisiae: Then and now.</title>
        <authorList>
            <person name="Engel S.R."/>
            <person name="Dietrich F.S."/>
            <person name="Fisk D.G."/>
            <person name="Binkley G."/>
            <person name="Balakrishnan R."/>
            <person name="Costanzo M.C."/>
            <person name="Dwight S.S."/>
            <person name="Hitz B.C."/>
            <person name="Karra K."/>
            <person name="Nash R.S."/>
            <person name="Weng S."/>
            <person name="Wong E.D."/>
            <person name="Lloyd P."/>
            <person name="Skrzypek M.S."/>
            <person name="Miyasato S.R."/>
            <person name="Simison M."/>
            <person name="Cherry J.M."/>
        </authorList>
    </citation>
    <scope>GENOME REANNOTATION</scope>
    <source>
        <strain>ATCC 204508 / S288c</strain>
    </source>
</reference>
<reference key="3">
    <citation type="journal article" date="1997" name="Yeast">
        <title>Sequence analysis of a 37.6 kbp cosmid clone from the right arm of Saccharomyces cerevisiae chromosome XII, carrying YAP3, HOG1, SNR6, tRNA-Arg3 and 23 new open reading frames, among which several homologies to proteins involved in cell division control and to mammalian growth factors and other animal proteins are found.</title>
        <authorList>
            <person name="Verhasselt P."/>
            <person name="Volckaert G."/>
        </authorList>
    </citation>
    <scope>NUCLEOTIDE SEQUENCE [GENOMIC DNA] OF 1-115</scope>
    <source>
        <strain>ATCC 90840 / EAY235 / FY23</strain>
    </source>
</reference>
<reference key="4">
    <citation type="journal article" date="2001" name="Mol. Cell">
        <title>Identification of a 60S preribosomal particle that is closely linked to nuclear export.</title>
        <authorList>
            <person name="Bassler J."/>
            <person name="Grandi P."/>
            <person name="Gadal O."/>
            <person name="Lessmann T."/>
            <person name="Petfalski E."/>
            <person name="Tollervey D."/>
            <person name="Lechner J."/>
            <person name="Hurt E."/>
        </authorList>
    </citation>
    <scope>SUBCELLULAR LOCATION</scope>
    <scope>SUBUNIT</scope>
</reference>
<reference key="5">
    <citation type="journal article" date="2002" name="BMC Genomics">
        <title>Expression and genomic analysis of midasin, a novel and highly conserved AAA protein distantly related to dynein.</title>
        <authorList>
            <person name="Garbarino J.E."/>
            <person name="Gibbons I.R."/>
        </authorList>
    </citation>
    <scope>CHARACTERIZATION</scope>
    <scope>SUBCELLULAR LOCATION</scope>
</reference>
<reference key="6">
    <citation type="journal article" date="2002" name="EMBO J.">
        <title>60S pre-ribosome formation viewed from assembly in the nucleolus until export to the cytoplasm.</title>
        <authorList>
            <person name="Nissan T.A."/>
            <person name="Bassler J."/>
            <person name="Petfalski E."/>
            <person name="Tollervey D."/>
            <person name="Hurt E."/>
        </authorList>
    </citation>
    <scope>IDENTIFICATION IN PRE-60S RIBOSOMES</scope>
    <scope>IDENTIFICATION BY MASS SPECTROMETRY</scope>
</reference>
<reference key="7">
    <citation type="journal article" date="2003" name="Nature">
        <title>Global analysis of protein expression in yeast.</title>
        <authorList>
            <person name="Ghaemmaghami S."/>
            <person name="Huh W.-K."/>
            <person name="Bower K."/>
            <person name="Howson R.W."/>
            <person name="Belle A."/>
            <person name="Dephoure N."/>
            <person name="O'Shea E.K."/>
            <person name="Weissman J.S."/>
        </authorList>
    </citation>
    <scope>LEVEL OF PROTEIN EXPRESSION [LARGE SCALE ANALYSIS]</scope>
</reference>
<reference key="8">
    <citation type="journal article" date="2004" name="J. Biol. Chem.">
        <title>Rea1, a dynein-related nuclear AAA-ATPase, is involved in late rRNA processing and nuclear export of 60 S subunits.</title>
        <authorList>
            <person name="Galani K."/>
            <person name="Nissan T.A."/>
            <person name="Petfalski E."/>
            <person name="Tollervey D."/>
            <person name="Hurt E."/>
        </authorList>
    </citation>
    <scope>FUNCTION</scope>
    <scope>SUBCELLULAR LOCATION</scope>
</reference>
<reference key="9">
    <citation type="journal article" date="2004" name="Mol. Cell">
        <title>A pre-ribosome with a tadpole-like structure functions in ATP-dependent maturation of 60S subunits.</title>
        <authorList>
            <person name="Nissan T.A."/>
            <person name="Galani K."/>
            <person name="Maco B."/>
            <person name="Tollervey D."/>
            <person name="Aebi U."/>
            <person name="Hurt E."/>
        </authorList>
    </citation>
    <scope>FUNCTION</scope>
    <scope>SUBUNIT</scope>
</reference>
<reference key="10">
    <citation type="journal article" date="2008" name="Mol. Cell. Proteomics">
        <title>A multidimensional chromatography technology for in-depth phosphoproteome analysis.</title>
        <authorList>
            <person name="Albuquerque C.P."/>
            <person name="Smolka M.B."/>
            <person name="Payne S.H."/>
            <person name="Bafna V."/>
            <person name="Eng J."/>
            <person name="Zhou H."/>
        </authorList>
    </citation>
    <scope>PHOSPHORYLATION [LARGE SCALE ANALYSIS] AT THR-1026; SER-2971; SER-4353 AND THR-4388</scope>
    <scope>IDENTIFICATION BY MASS SPECTROMETRY [LARGE SCALE ANALYSIS]</scope>
</reference>
<reference key="11">
    <citation type="journal article" date="2009" name="Cell">
        <title>Mechanochemical removal of ribosome biogenesis factors from nascent 60S ribosomal subunits.</title>
        <authorList>
            <person name="Ulbrich C."/>
            <person name="Diepholz M."/>
            <person name="Bassler J."/>
            <person name="Kressler D."/>
            <person name="Pertschy B."/>
            <person name="Galani K."/>
            <person name="Bottcher B."/>
            <person name="Hurt E."/>
        </authorList>
    </citation>
    <scope>FUNCTION</scope>
    <scope>ASSOCIATION WITH THE PRE-60S PARTICLE</scope>
    <scope>INTERACTION WITH RSA4</scope>
</reference>
<reference key="12">
    <citation type="journal article" date="2009" name="Science">
        <title>Global analysis of Cdk1 substrate phosphorylation sites provides insights into evolution.</title>
        <authorList>
            <person name="Holt L.J."/>
            <person name="Tuch B.B."/>
            <person name="Villen J."/>
            <person name="Johnson A.D."/>
            <person name="Gygi S.P."/>
            <person name="Morgan D.O."/>
        </authorList>
    </citation>
    <scope>PHOSPHORYLATION [LARGE SCALE ANALYSIS] AT SER-2971 AND SER-4555</scope>
    <scope>IDENTIFICATION BY MASS SPECTROMETRY [LARGE SCALE ANALYSIS]</scope>
</reference>
<reference key="13">
    <citation type="journal article" date="2010" name="Mol. Cell">
        <title>The AAA-ATPase Rea1 drives removal of biogenesis factors during multiple stages of 60S ribosome assembly.</title>
        <authorList>
            <person name="Bassler J."/>
            <person name="Kallas M."/>
            <person name="Pertschy B."/>
            <person name="Ulbrich C."/>
            <person name="Thoms M."/>
            <person name="Hurt E."/>
        </authorList>
    </citation>
    <scope>FUNCTION</scope>
    <scope>INTERACTION WITH RSA4 AND YTM1</scope>
    <scope>SUBCELLULAR LOCATION</scope>
</reference>
<reference key="14">
    <citation type="journal article" date="2014" name="Nature">
        <title>Coupled GTPase and remodelling ATPase activities form a checkpoint for ribosome export.</title>
        <authorList>
            <person name="Matsuo Y."/>
            <person name="Granneman S."/>
            <person name="Thoms M."/>
            <person name="Manikas R.G."/>
            <person name="Tollervey D."/>
            <person name="Hurt E."/>
        </authorList>
    </citation>
    <scope>FUNCTION</scope>
</reference>
<reference key="15">
    <citation type="journal article" date="2016" name="Nat. Struct. Mol. Biol.">
        <title>Architecture of the Rix1-Rea1 checkpoint machinery during pre-60S-ribosome remodeling.</title>
        <authorList>
            <person name="Barrio-Garcia C."/>
            <person name="Thoms M."/>
            <person name="Flemming D."/>
            <person name="Kater L."/>
            <person name="Berninghausen O."/>
            <person name="Bassler J."/>
            <person name="Beckmann R."/>
            <person name="Hurt E."/>
        </authorList>
    </citation>
    <scope>STRUCTURE BY ELECTRON MICROSCOPY (9.50 ANGSTROMS)</scope>
    <scope>INTERACTION WITH RIX1</scope>
</reference>
<evidence type="ECO:0000255" key="1"/>
<evidence type="ECO:0000255" key="2">
    <source>
        <dbReference type="PROSITE-ProRule" id="PRU00219"/>
    </source>
</evidence>
<evidence type="ECO:0000256" key="3">
    <source>
        <dbReference type="SAM" id="MobiDB-lite"/>
    </source>
</evidence>
<evidence type="ECO:0000269" key="4">
    <source>
    </source>
</evidence>
<evidence type="ECO:0000269" key="5">
    <source>
    </source>
</evidence>
<evidence type="ECO:0000269" key="6">
    <source>
    </source>
</evidence>
<evidence type="ECO:0000269" key="7">
    <source>
    </source>
</evidence>
<evidence type="ECO:0000269" key="8">
    <source>
    </source>
</evidence>
<evidence type="ECO:0000269" key="9">
    <source>
    </source>
</evidence>
<evidence type="ECO:0000269" key="10">
    <source>
    </source>
</evidence>
<evidence type="ECO:0000269" key="11">
    <source>
    </source>
</evidence>
<evidence type="ECO:0000269" key="12">
    <source>
    </source>
</evidence>
<evidence type="ECO:0000269" key="13">
    <source>
    </source>
</evidence>
<evidence type="ECO:0000305" key="14"/>
<evidence type="ECO:0000305" key="15">
    <source>
    </source>
</evidence>
<evidence type="ECO:0007744" key="16">
    <source>
    </source>
</evidence>
<evidence type="ECO:0007744" key="17">
    <source>
    </source>
</evidence>
<keyword id="KW-0002">3D-structure</keyword>
<keyword id="KW-0067">ATP-binding</keyword>
<keyword id="KW-0143">Chaperone</keyword>
<keyword id="KW-0547">Nucleotide-binding</keyword>
<keyword id="KW-0539">Nucleus</keyword>
<keyword id="KW-0597">Phosphoprotein</keyword>
<keyword id="KW-1185">Reference proteome</keyword>
<keyword id="KW-0677">Repeat</keyword>
<name>MDN1_YEAST</name>
<dbReference type="EMBL" id="U53876">
    <property type="protein sequence ID" value="AAB67548.1"/>
    <property type="molecule type" value="Genomic_DNA"/>
</dbReference>
<dbReference type="EMBL" id="Z73278">
    <property type="protein sequence ID" value="CAA97671.1"/>
    <property type="molecule type" value="Genomic_DNA"/>
</dbReference>
<dbReference type="EMBL" id="X89514">
    <property type="protein sequence ID" value="CAA61684.1"/>
    <property type="molecule type" value="Genomic_DNA"/>
</dbReference>
<dbReference type="EMBL" id="Z73279">
    <property type="protein sequence ID" value="CAA97673.1"/>
    <property type="molecule type" value="Genomic_DNA"/>
</dbReference>
<dbReference type="EMBL" id="BK006945">
    <property type="protein sequence ID" value="DAA09422.1"/>
    <property type="molecule type" value="Genomic_DNA"/>
</dbReference>
<dbReference type="PIR" id="S64942">
    <property type="entry name" value="S64942"/>
</dbReference>
<dbReference type="RefSeq" id="NP_013207.1">
    <property type="nucleotide sequence ID" value="NM_001181993.1"/>
</dbReference>
<dbReference type="PDB" id="5JCS">
    <property type="method" value="EM"/>
    <property type="resolution" value="9.50 A"/>
    <property type="chains" value="s=1-4910"/>
</dbReference>
<dbReference type="PDB" id="6HYD">
    <property type="method" value="EM"/>
    <property type="resolution" value="3.90 A"/>
    <property type="chains" value="A=2356-4041"/>
</dbReference>
<dbReference type="PDB" id="6HYP">
    <property type="method" value="EM"/>
    <property type="resolution" value="4.40 A"/>
    <property type="chains" value="A=238-4910"/>
</dbReference>
<dbReference type="PDB" id="6I26">
    <property type="method" value="EM"/>
    <property type="resolution" value="4.30 A"/>
    <property type="chains" value="A=238-4910"/>
</dbReference>
<dbReference type="PDB" id="6I27">
    <property type="method" value="EM"/>
    <property type="resolution" value="7.80 A"/>
    <property type="chains" value="A=238-4910"/>
</dbReference>
<dbReference type="PDB" id="6YLF">
    <property type="method" value="EM"/>
    <property type="resolution" value="4.20 A"/>
    <property type="chains" value="AP1=1-4910"/>
</dbReference>
<dbReference type="PDB" id="6YLH">
    <property type="method" value="EM"/>
    <property type="resolution" value="3.10 A"/>
    <property type="chains" value="v=1-4910"/>
</dbReference>
<dbReference type="PDBsum" id="5JCS"/>
<dbReference type="PDBsum" id="6HYD"/>
<dbReference type="PDBsum" id="6HYP"/>
<dbReference type="PDBsum" id="6I26"/>
<dbReference type="PDBsum" id="6I27"/>
<dbReference type="PDBsum" id="6YLF"/>
<dbReference type="PDBsum" id="6YLH"/>
<dbReference type="EMDB" id="EMD-0308"/>
<dbReference type="EMDB" id="EMD-0309"/>
<dbReference type="EMDB" id="EMD-0328"/>
<dbReference type="EMDB" id="EMD-0329"/>
<dbReference type="EMDB" id="EMD-10837"/>
<dbReference type="EMDB" id="EMD-10839"/>
<dbReference type="SMR" id="Q12019"/>
<dbReference type="BioGRID" id="31379">
    <property type="interactions" value="184"/>
</dbReference>
<dbReference type="DIP" id="DIP-6285N"/>
<dbReference type="FunCoup" id="Q12019">
    <property type="interactions" value="1036"/>
</dbReference>
<dbReference type="IntAct" id="Q12019">
    <property type="interactions" value="63"/>
</dbReference>
<dbReference type="MINT" id="Q12019"/>
<dbReference type="STRING" id="4932.YLR106C"/>
<dbReference type="iPTMnet" id="Q12019"/>
<dbReference type="PaxDb" id="4932-YLR106C"/>
<dbReference type="PeptideAtlas" id="Q12019"/>
<dbReference type="EnsemblFungi" id="YLR106C_mRNA">
    <property type="protein sequence ID" value="YLR106C"/>
    <property type="gene ID" value="YLR106C"/>
</dbReference>
<dbReference type="GeneID" id="850796"/>
<dbReference type="KEGG" id="sce:YLR106C"/>
<dbReference type="AGR" id="SGD:S000004096"/>
<dbReference type="SGD" id="S000004096">
    <property type="gene designation" value="MDN1"/>
</dbReference>
<dbReference type="VEuPathDB" id="FungiDB:YLR106C"/>
<dbReference type="eggNOG" id="KOG1808">
    <property type="taxonomic scope" value="Eukaryota"/>
</dbReference>
<dbReference type="GeneTree" id="ENSGT00550000074802"/>
<dbReference type="HOGENOM" id="CLU_000050_0_2_1"/>
<dbReference type="InParanoid" id="Q12019"/>
<dbReference type="OMA" id="ILEQWHR"/>
<dbReference type="OrthoDB" id="5186at2759"/>
<dbReference type="BioCyc" id="YEAST:G3O-32254-MONOMER"/>
<dbReference type="BioGRID-ORCS" id="850796">
    <property type="hits" value="0 hits in 10 CRISPR screens"/>
</dbReference>
<dbReference type="PRO" id="PR:Q12019"/>
<dbReference type="Proteomes" id="UP000002311">
    <property type="component" value="Chromosome XII"/>
</dbReference>
<dbReference type="RNAct" id="Q12019">
    <property type="molecule type" value="protein"/>
</dbReference>
<dbReference type="GO" id="GO:0005739">
    <property type="term" value="C:mitochondrion"/>
    <property type="evidence" value="ECO:0007005"/>
    <property type="project" value="SGD"/>
</dbReference>
<dbReference type="GO" id="GO:0005730">
    <property type="term" value="C:nucleolus"/>
    <property type="evidence" value="ECO:0007669"/>
    <property type="project" value="UniProtKB-SubCell"/>
</dbReference>
<dbReference type="GO" id="GO:0005654">
    <property type="term" value="C:nucleoplasm"/>
    <property type="evidence" value="ECO:0000314"/>
    <property type="project" value="SGD"/>
</dbReference>
<dbReference type="GO" id="GO:0005634">
    <property type="term" value="C:nucleus"/>
    <property type="evidence" value="ECO:0000314"/>
    <property type="project" value="SGD"/>
</dbReference>
<dbReference type="GO" id="GO:0030687">
    <property type="term" value="C:preribosome, large subunit precursor"/>
    <property type="evidence" value="ECO:0000318"/>
    <property type="project" value="GO_Central"/>
</dbReference>
<dbReference type="GO" id="GO:0005524">
    <property type="term" value="F:ATP binding"/>
    <property type="evidence" value="ECO:0007669"/>
    <property type="project" value="UniProtKB-KW"/>
</dbReference>
<dbReference type="GO" id="GO:0016887">
    <property type="term" value="F:ATP hydrolysis activity"/>
    <property type="evidence" value="ECO:0000314"/>
    <property type="project" value="SGD"/>
</dbReference>
<dbReference type="GO" id="GO:0110136">
    <property type="term" value="P:protein-RNA complex remodeling"/>
    <property type="evidence" value="ECO:0000314"/>
    <property type="project" value="SGD"/>
</dbReference>
<dbReference type="GO" id="GO:2000200">
    <property type="term" value="P:regulation of ribosomal subunit export from nucleus"/>
    <property type="evidence" value="ECO:0000315"/>
    <property type="project" value="SGD"/>
</dbReference>
<dbReference type="GO" id="GO:0000027">
    <property type="term" value="P:ribosomal large subunit assembly"/>
    <property type="evidence" value="ECO:0000315"/>
    <property type="project" value="SGD"/>
</dbReference>
<dbReference type="GO" id="GO:0000055">
    <property type="term" value="P:ribosomal large subunit export from nucleus"/>
    <property type="evidence" value="ECO:0000318"/>
    <property type="project" value="GO_Central"/>
</dbReference>
<dbReference type="GO" id="GO:0006364">
    <property type="term" value="P:rRNA processing"/>
    <property type="evidence" value="ECO:0000315"/>
    <property type="project" value="SGD"/>
</dbReference>
<dbReference type="CDD" id="cd00009">
    <property type="entry name" value="AAA"/>
    <property type="match status" value="3"/>
</dbReference>
<dbReference type="CDD" id="cd01460">
    <property type="entry name" value="vWA_midasin"/>
    <property type="match status" value="1"/>
</dbReference>
<dbReference type="FunFam" id="3.40.50.300:FF:000142">
    <property type="entry name" value="Midasin"/>
    <property type="match status" value="1"/>
</dbReference>
<dbReference type="FunFam" id="3.40.50.300:FF:000582">
    <property type="entry name" value="Midasin"/>
    <property type="match status" value="1"/>
</dbReference>
<dbReference type="FunFam" id="3.40.50.300:FF:000712">
    <property type="entry name" value="Midasin"/>
    <property type="match status" value="1"/>
</dbReference>
<dbReference type="FunFam" id="3.40.50.300:FF:001053">
    <property type="entry name" value="Midasin"/>
    <property type="match status" value="1"/>
</dbReference>
<dbReference type="FunFam" id="3.40.50.300:FF:001368">
    <property type="entry name" value="Midasin"/>
    <property type="match status" value="1"/>
</dbReference>
<dbReference type="Gene3D" id="3.40.50.300">
    <property type="entry name" value="P-loop containing nucleotide triphosphate hydrolases"/>
    <property type="match status" value="6"/>
</dbReference>
<dbReference type="InterPro" id="IPR003593">
    <property type="entry name" value="AAA+_ATPase"/>
</dbReference>
<dbReference type="InterPro" id="IPR040848">
    <property type="entry name" value="AAA_lid_7"/>
</dbReference>
<dbReference type="InterPro" id="IPR011704">
    <property type="entry name" value="ATPase_dyneun-rel_AAA"/>
</dbReference>
<dbReference type="InterPro" id="IPR048617">
    <property type="entry name" value="MDN1_AAA_lid_4"/>
</dbReference>
<dbReference type="InterPro" id="IPR012099">
    <property type="entry name" value="Midasin"/>
</dbReference>
<dbReference type="InterPro" id="IPR041190">
    <property type="entry name" value="Midasin_AAA_lid_5"/>
</dbReference>
<dbReference type="InterPro" id="IPR027417">
    <property type="entry name" value="P-loop_NTPase"/>
</dbReference>
<dbReference type="InterPro" id="IPR025662">
    <property type="entry name" value="Sigma_54_int_dom_ATP-bd_1"/>
</dbReference>
<dbReference type="InterPro" id="IPR002035">
    <property type="entry name" value="VWF_A"/>
</dbReference>
<dbReference type="InterPro" id="IPR036465">
    <property type="entry name" value="vWFA_dom_sf"/>
</dbReference>
<dbReference type="PANTHER" id="PTHR48103:SF2">
    <property type="entry name" value="MIDASIN"/>
    <property type="match status" value="1"/>
</dbReference>
<dbReference type="PANTHER" id="PTHR48103">
    <property type="entry name" value="MIDASIN-RELATED"/>
    <property type="match status" value="1"/>
</dbReference>
<dbReference type="Pfam" id="PF07728">
    <property type="entry name" value="AAA_5"/>
    <property type="match status" value="8"/>
</dbReference>
<dbReference type="Pfam" id="PF17865">
    <property type="entry name" value="AAA_lid_5"/>
    <property type="match status" value="1"/>
</dbReference>
<dbReference type="Pfam" id="PF17867">
    <property type="entry name" value="AAA_lid_7"/>
    <property type="match status" value="3"/>
</dbReference>
<dbReference type="Pfam" id="PF21108">
    <property type="entry name" value="MDN1_4th"/>
    <property type="match status" value="1"/>
</dbReference>
<dbReference type="PIRSF" id="PIRSF010340">
    <property type="entry name" value="Midasin"/>
    <property type="match status" value="1"/>
</dbReference>
<dbReference type="SMART" id="SM00382">
    <property type="entry name" value="AAA"/>
    <property type="match status" value="6"/>
</dbReference>
<dbReference type="SUPFAM" id="SSF52540">
    <property type="entry name" value="P-loop containing nucleoside triphosphate hydrolases"/>
    <property type="match status" value="6"/>
</dbReference>
<dbReference type="SUPFAM" id="SSF53300">
    <property type="entry name" value="vWA-like"/>
    <property type="match status" value="1"/>
</dbReference>
<dbReference type="PROSITE" id="PS50234">
    <property type="entry name" value="VWFA"/>
    <property type="match status" value="1"/>
</dbReference>
<protein>
    <recommendedName>
        <fullName>Midasin</fullName>
    </recommendedName>
    <alternativeName>
        <fullName>Dynein-related AAA-ATPase REA1</fullName>
    </alternativeName>
    <alternativeName>
        <fullName>MIDAS-containing protein</fullName>
    </alternativeName>
    <alternativeName>
        <fullName>Ribosome export/assembly protein 1</fullName>
    </alternativeName>
</protein>
<comment type="function">
    <text evidence="8 9 10 11 12 13">Nuclear chaperone required for maturation and nuclear export of pre-60S ribosome subunits. Functions at successive maturation steps to remove ribosomal factors at critical transition points, first driving the exit of early pre-60S particles from the nucleolus and then driving late pre-60S particles from the nucleus (PubMed:15260980, PubMed:15528184, PubMed:19737519, PubMed:20542003). At an early stage in 60S maturation, mediates the dissociation of the NOP7 complex (YTM1-ERB1-NOP7) from early pre-60S particles, rendering them competent for export from the nucleolus to the nucleoplasm (PubMed:20542003). Subsequently recruited to the nucleoplasmic particles through interaction with the RIX1 complex. This binding is only possible if the 5S RNP at the central protuberance has undergone the rotation to complete its maturation (PubMed:26619264). After remodeling, removes the ribosome biogenesis factor RSA4 in an ATP hydrolysis-driven step from pre-60S ribosomal subunits, rendering them competent for export from the nucleoplasm to the cytoplasm (PubMed:19737519, PubMed:20542003). Activates the GTPase activity of NOG2, which disengages from the pre-60S particle upon GTP hydrolysis, thus freeing its binding site for the nuclear export factor NMD3 (PubMed:24240281).</text>
</comment>
<comment type="subunit">
    <text evidence="4 6 8 10 11 13">Associates with pre-60S ribosomes in the nucleoplasm (PubMed:11583615, PubMed:12374754, PubMed:15260980, PubMed:19737519). Interacts (via its hexameric AAA ATPase ring) with the RIX1 complex (via RIX1); this interaction is crucial for recruitment of MDN1 to the pre-ribosomal particle (PubMed:15260980, PubMed:26619264). Interacts (via VWFA/MIDAS domain) with YTM1 (via UBL domain) (PubMed:20542003). Interacts (via VWFA/MIDAS domain) with RSA4 (via UBL domain) (PubMed:19737519, PubMed:20542003).</text>
</comment>
<comment type="interaction">
    <interactant intactId="EBI-10633">
        <id>Q12019</id>
    </interactant>
    <interactant intactId="EBI-21980">
        <id>P25382</id>
        <label>RSA4</label>
    </interactant>
    <organismsDiffer>false</organismsDiffer>
    <experiments>6</experiments>
</comment>
<comment type="subcellular location">
    <subcellularLocation>
        <location evidence="4 5 9">Nucleus</location>
    </subcellularLocation>
    <subcellularLocation>
        <location evidence="11">Nucleus</location>
        <location evidence="11">Nucleolus</location>
    </subcellularLocation>
    <subcellularLocation>
        <location evidence="9">Nucleus</location>
        <location evidence="9">Nucleoplasm</location>
    </subcellularLocation>
</comment>
<comment type="domain">
    <text evidence="15">The protein has several distinct domains, an N-terminal extension (35 kDa), followed by an ATPase domain containing a hexameric ring of six tandem AAA protomers (between 28 and 40 kDa each), a linker domain (260 kDa), an Asp/Glu-rich domain (approximately 70 kDa) and a C-terminal VWFA domain (30 kDa) that possesses a MIDAS (metal ion-dependent adhesion site). The ring-like ATPase head domain associates with the RIX1 complex on the pre-ribosome, while the flexible tail protrudes from the molecule.</text>
</comment>
<comment type="miscellaneous">
    <text evidence="7">Present with 538 molecules/cell in log phase SD medium.</text>
</comment>
<comment type="similarity">
    <text evidence="14">Belongs to the midasin family.</text>
</comment>